<sequence length="1834" mass="207487">MASSSLPNLVPLGPESLRPFTRASLAAIERRALEEEARLQRNKQMEIQETERNARSDLEAGKNLPLIYGDPPPEVIGIPLEDLDPYYSNKKTFIVLNKGKAIFRFSATPALYMLSPFSIIRRSAIKVLIHSLFSMFIMITILPNCVVMTMSDPPPWPIHVENTFTGINTFESLIKMLARGFCIDDFTFLRDPWNWLDFSVIMMAYLTEFVDLGNISALRTFRVLRALKTITVIPGLKTIVGALIQSVKKLSDVMILTVFCLSVFALVGLQLFMGNLRQKCVRWPQPFNDTNTTWYGNDTWYSNDTWNSNDTWSSNDMWNSHESMASNYTFDWDAYINDEGNFYFLEGAKDALLCGNSSDAGHCPEGYKCIKTGRNPNYGYTSHDTFSWAFLALFRLMIQDYWENLFQLTLRAAGKTYMIFFVVIIFLGSFYLINLILAVVTMAYAEQNEATLAEDQEKEEEFQQMMEKFQKQQEELEKAKADQALEGGEAGGDPAHSKDCNGSLDTSPGEKGPPRQSCSADSGVSDAMEELEEAHQKCPPWWYKCAHKVLIWNCCTPWVKFKNIIHLIVMDPFVDLGITICIVLNTLFMAMEHYPMTEHFDKVLTVGNLVFTGIFTAEMVLKLIALDPYEYFQQGWNVFDSIIVTLSWVELGLVNVKGLSVLRSFRLVRSLKLAKSWPTLNMFIRIIGNSGGGLGNLTLVLAIIVVNFSVVGMQLFGKNYKECVCKNASDCALPRWKMCDFFHSFLIVLRILCGEWIEPMWGFMEVAGQAMFLTVLLMVMVNGNLVDLDLFLALLLNPLNSDNLSASDEDGEMNNLQISSWPIKLGICFANAFLLGLLHGKILSPKDIMLSLGDPGEAGEAGEAEESAPEDEKKEPPPEDDDKDLKKDNHILNHMGLVDGTPTSIELDHLNFINNPYLTIHVPIASEESDLEMPTEEETDTFSEPEDGKKPLQPLDGNSSVCSTADYKPPEEDPEEQAEENPEGEQPEECFTEACVQRFPCLSVDISQGRGKMWWTLRRACFKIVEHHWFKTFNSSLILLNSGTLAFEDIYIEQRRVIRTILEYADKVFTYIFIMEMLLKWVAYGFKVYFTNAWCWLDFLIVDVSIISLVANWLGYSELGPIKSLRTLRALRPLRALSRFEGMRVVVNALLGAIPSIMNVLLVCLIFWVIFSIMGVNLFAAKIYYFINTTTSERFDISGVNNKSECESLIHTGQVRWLNVKVNYDNVGLGYLSLLQVATFKGWMDIMYSAVDSREQEEQPQYEVNIYMYLYFVIFIIFGSFFTINSLIRLIIVNFNQQKKKLGGKDIFMTEEQKKYYNAMKKLGSKKPQKPIPRPQNKIQGMVYDFVTKQVFDITIMILICLNMVTMMVETDDQSQLKVDILYNINMVFIIVFTGECVLKMFALRQNYFTVGWNIFDFVVVILSIVGLALSDLIQKYFVSPTLFRVIRLARIGRVLRLIRGAKGIRTLLFALMMSLPALFNIGLLLILVMFIYSIFGMSNFAYVKKESGIDDMFNFETFGNSIICLFEITTSAGWDGLLNPILNSGPPDCDPTLENPGTSVRGDCGNPSIGICFFCSYIIISFLIVVNMYIAIILENFNVATEESSDPLGEDDFEIFFEKWEKFGPDATQFIDYSRLSDFVDTLQEPLRIAKPNKIKLITLDLPMVPGDKIHCLDILFALTKEVLGDSGEMDALKETMEEKFMAANPSKVSYEPITTTLKRKQEEVCAIKIQRAYRRHLLQRSVKQASYMYRHSQDGSGDGAPEKEGLIANTMSKMYGRENGNSGVQNKGEERGSTGDAGPTMGLTPINPSDSALPPSPPPGLPLHPGVKESLV</sequence>
<evidence type="ECO:0000250" key="1">
    <source>
        <dbReference type="UniProtKB" id="P15390"/>
    </source>
</evidence>
<evidence type="ECO:0000250" key="2">
    <source>
        <dbReference type="UniProtKB" id="P35499"/>
    </source>
</evidence>
<evidence type="ECO:0000255" key="3"/>
<evidence type="ECO:0000255" key="4">
    <source>
        <dbReference type="PROSITE-ProRule" id="PRU00116"/>
    </source>
</evidence>
<evidence type="ECO:0000256" key="5">
    <source>
        <dbReference type="SAM" id="MobiDB-lite"/>
    </source>
</evidence>
<evidence type="ECO:0000269" key="6">
    <source>
    </source>
</evidence>
<evidence type="ECO:0000305" key="7"/>
<accession>Q28371</accession>
<name>SCN4A_HORSE</name>
<proteinExistence type="evidence at protein level"/>
<organism>
    <name type="scientific">Equus caballus</name>
    <name type="common">Horse</name>
    <dbReference type="NCBI Taxonomy" id="9796"/>
    <lineage>
        <taxon>Eukaryota</taxon>
        <taxon>Metazoa</taxon>
        <taxon>Chordata</taxon>
        <taxon>Craniata</taxon>
        <taxon>Vertebrata</taxon>
        <taxon>Euteleostomi</taxon>
        <taxon>Mammalia</taxon>
        <taxon>Eutheria</taxon>
        <taxon>Laurasiatheria</taxon>
        <taxon>Perissodactyla</taxon>
        <taxon>Equidae</taxon>
        <taxon>Equus</taxon>
    </lineage>
</organism>
<protein>
    <recommendedName>
        <fullName evidence="2">Sodium channel protein type 4 subunit alpha</fullName>
    </recommendedName>
    <alternativeName>
        <fullName>Sodium channel protein skeletal muscle subunit alpha</fullName>
    </alternativeName>
    <alternativeName>
        <fullName>Sodium channel protein type IV subunit alpha</fullName>
    </alternativeName>
    <alternativeName>
        <fullName evidence="2">Voltage-gated sodium channel subunit alpha Nav1.4</fullName>
    </alternativeName>
</protein>
<keyword id="KW-1003">Cell membrane</keyword>
<keyword id="KW-0225">Disease variant</keyword>
<keyword id="KW-1015">Disulfide bond</keyword>
<keyword id="KW-0325">Glycoprotein</keyword>
<keyword id="KW-0407">Ion channel</keyword>
<keyword id="KW-0406">Ion transport</keyword>
<keyword id="KW-0472">Membrane</keyword>
<keyword id="KW-0597">Phosphoprotein</keyword>
<keyword id="KW-1185">Reference proteome</keyword>
<keyword id="KW-0677">Repeat</keyword>
<keyword id="KW-0915">Sodium</keyword>
<keyword id="KW-0894">Sodium channel</keyword>
<keyword id="KW-0739">Sodium transport</keyword>
<keyword id="KW-0812">Transmembrane</keyword>
<keyword id="KW-1133">Transmembrane helix</keyword>
<keyword id="KW-0813">Transport</keyword>
<keyword id="KW-0851">Voltage-gated channel</keyword>
<reference key="1">
    <citation type="submission" date="1995-05" db="EMBL/GenBank/DDBJ databases">
        <authorList>
            <person name="Stephan D.A."/>
            <person name="Wang J."/>
            <person name="Spier S."/>
            <person name="Hoffman E.P."/>
        </authorList>
    </citation>
    <scope>NUCLEOTIDE SEQUENCE [MRNA]</scope>
    <source>
        <tissue>Skeletal muscle</tissue>
    </source>
</reference>
<reference key="2">
    <citation type="journal article" date="1992" name="Nat. Genet.">
        <title>Periodic paralysis in quarter horses: a sodium channel mutation disseminated by selective breeding.</title>
        <authorList>
            <person name="Rudolph J.A."/>
            <person name="Spier S.J."/>
            <person name="Byrns G."/>
            <person name="Rojas C.V."/>
            <person name="Bernoco D."/>
            <person name="Hoffman E.P."/>
        </authorList>
    </citation>
    <scope>INVOLVEMENT IN HYPP</scope>
    <scope>VARIANT HYPP LEU-1416</scope>
    <scope>FUNCTION</scope>
</reference>
<comment type="function">
    <text evidence="2 6">Pore-forming subunit of Nav1.4, a voltage-gated sodium (Nav) channel that directly mediates the depolarizing phase of action potentials in excitable membranes. Navs, also called VGSCs (voltage-gated sodium channels) or VDSCs (voltage-dependent sodium channels), operate by switching between closed and open conformations depending on the voltage difference across the membrane. In the open conformation they allow Na(+) ions to selectively pass through the pore, along their electrochemical gradient. The influx of Na+ ions provokes membrane depolarization, initiating the propagation of electrical signals throughout cells and tissues (By similarity). Highly expressed in skeletal muscles, Nav1.4 generates the action potential crucial for muscle contraction (PubMed:1338908).</text>
</comment>
<comment type="catalytic activity">
    <reaction evidence="2">
        <text>Na(+)(in) = Na(+)(out)</text>
        <dbReference type="Rhea" id="RHEA:34963"/>
        <dbReference type="ChEBI" id="CHEBI:29101"/>
    </reaction>
</comment>
<comment type="subunit">
    <text evidence="2">The Nav1.4 voltage-gated sodium channel consists of an ion-conducting alpha subunit SCN4A which is functional on its own and a regulatory beta subunit SCN1B (By similarity). SCN1B strongly enhances the presence of SCN4A at the cell surface (By similarity). SCN1B is also required for rapid channel inactivation and recovery after inactivation. It prevents the decrease of channel activity in response to repetitive, high-frequency depolarizations (By similarity). Interacts with the syntrophins SNTA1, SNTB1 and SNTB2 (via PDZ domain); probably links SCN4A to the actin cytoskeleton and the extracellular matrix via the dystrophin-associated protein complex and regulates its localization in muscle cells (By similarity). Interacts with TMEM233; probable regulator of the channel (By similarity).</text>
</comment>
<comment type="subcellular location">
    <subcellularLocation>
        <location evidence="1">Cell membrane</location>
        <topology evidence="2">Multi-pass membrane protein</topology>
    </subcellularLocation>
</comment>
<comment type="domain">
    <text evidence="2">The sequence contains 4 internal repeats, each with 5 hydrophobic segments (S1, S2, S3, S5, S6) and one positively charged segment (S4). Segments S4 are probably the voltage-sensors and are characterized by a series of positively charged amino acids at every third position.</text>
</comment>
<comment type="disease">
    <text evidence="6">Defects in SCN4A are the cause of periodic paralysis hyperkalemic (HYPP). HYPP is an autosomal dominant channelopathy characterized by episodic flaccid generalized muscle weakness associated with high levels of serum potassium. HYPP is frequently found in Quarter Horses, the most popular equine breed in the United States.</text>
</comment>
<comment type="similarity">
    <text evidence="7">Belongs to the sodium channel (TC 1.A.1.10) family. Nav1.4/SCN4A subfamily.</text>
</comment>
<feature type="chain" id="PRO_0000371315" description="Sodium channel protein type 4 subunit alpha">
    <location>
        <begin position="1"/>
        <end position="1834"/>
    </location>
</feature>
<feature type="topological domain" description="Cytoplasmic" evidence="7">
    <location>
        <begin position="1"/>
        <end position="131"/>
    </location>
</feature>
<feature type="transmembrane region" description="Helical; Name=S1 of repeat I" evidence="2">
    <location>
        <begin position="132"/>
        <end position="150"/>
    </location>
</feature>
<feature type="topological domain" description="Extracellular" evidence="7">
    <location>
        <begin position="151"/>
        <end position="157"/>
    </location>
</feature>
<feature type="transmembrane region" description="Helical; Name=S2 of repeat I" evidence="2">
    <location>
        <begin position="158"/>
        <end position="178"/>
    </location>
</feature>
<feature type="topological domain" description="Cytoplasmic" evidence="7">
    <location>
        <begin position="179"/>
        <end position="192"/>
    </location>
</feature>
<feature type="transmembrane region" description="Helical; Name=S3 of repeat I" evidence="2">
    <location>
        <begin position="193"/>
        <end position="210"/>
    </location>
</feature>
<feature type="topological domain" description="Extracellular" evidence="7">
    <location>
        <begin position="211"/>
        <end position="216"/>
    </location>
</feature>
<feature type="transmembrane region" description="Helical; Name=S4 of repeat I" evidence="2">
    <location>
        <begin position="217"/>
        <end position="233"/>
    </location>
</feature>
<feature type="topological domain" description="Cytoplasmic" evidence="7">
    <location>
        <begin position="234"/>
        <end position="252"/>
    </location>
</feature>
<feature type="transmembrane region" description="Helical; Name=S5 of repeat I" evidence="2">
    <location>
        <begin position="253"/>
        <end position="272"/>
    </location>
</feature>
<feature type="topological domain" description="Extracellular" evidence="7">
    <location>
        <begin position="273"/>
        <end position="385"/>
    </location>
</feature>
<feature type="intramembrane region" description="Pore-forming" evidence="2">
    <location>
        <begin position="386"/>
        <end position="410"/>
    </location>
</feature>
<feature type="topological domain" description="Extracellular" evidence="7">
    <location>
        <begin position="411"/>
        <end position="417"/>
    </location>
</feature>
<feature type="transmembrane region" description="Helical; Name=S6 of repeat I" evidence="2">
    <location>
        <begin position="418"/>
        <end position="438"/>
    </location>
</feature>
<feature type="topological domain" description="Cytoplasmic" evidence="7">
    <location>
        <begin position="439"/>
        <end position="572"/>
    </location>
</feature>
<feature type="transmembrane region" description="Helical; Name=S1 of repeat II" evidence="2">
    <location>
        <begin position="573"/>
        <end position="591"/>
    </location>
</feature>
<feature type="topological domain" description="Extracellular" evidence="7">
    <location>
        <begin position="592"/>
        <end position="602"/>
    </location>
</feature>
<feature type="transmembrane region" description="Helical; Name=S2 of repeat II" evidence="2">
    <location>
        <begin position="603"/>
        <end position="622"/>
    </location>
</feature>
<feature type="topological domain" description="Cytoplasmic" evidence="7">
    <location>
        <begin position="623"/>
        <end position="636"/>
    </location>
</feature>
<feature type="transmembrane region" description="Helical; Name=S3 of repeat II" evidence="2">
    <location>
        <begin position="637"/>
        <end position="656"/>
    </location>
</feature>
<feature type="topological domain" description="Extracellular" evidence="7">
    <location>
        <begin position="657"/>
        <end position="658"/>
    </location>
</feature>
<feature type="transmembrane region" description="Helical; Name=S4 of repeat II" evidence="2">
    <location>
        <begin position="659"/>
        <end position="676"/>
    </location>
</feature>
<feature type="topological domain" description="Cytoplasmic" evidence="7">
    <location>
        <begin position="677"/>
        <end position="692"/>
    </location>
</feature>
<feature type="transmembrane region" description="Helical; Name=S5 of repeat II" evidence="2">
    <location>
        <begin position="693"/>
        <end position="711"/>
    </location>
</feature>
<feature type="topological domain" description="Extracellular" evidence="7">
    <location>
        <begin position="712"/>
        <end position="740"/>
    </location>
</feature>
<feature type="intramembrane region" description="Pore-forming" evidence="2">
    <location>
        <begin position="741"/>
        <end position="761"/>
    </location>
</feature>
<feature type="topological domain" description="Extracellular" evidence="7">
    <location>
        <begin position="762"/>
        <end position="772"/>
    </location>
</feature>
<feature type="transmembrane region" description="Helical; Name=S6 of repeat II" evidence="2">
    <location>
        <begin position="773"/>
        <end position="791"/>
    </location>
</feature>
<feature type="topological domain" description="Cytoplasmic" evidence="7">
    <location>
        <begin position="792"/>
        <end position="1029"/>
    </location>
</feature>
<feature type="transmembrane region" description="Helical; Name=S1 of repeat III" evidence="2">
    <location>
        <begin position="1030"/>
        <end position="1047"/>
    </location>
</feature>
<feature type="topological domain" description="Extracellular" evidence="7">
    <location>
        <begin position="1048"/>
        <end position="1060"/>
    </location>
</feature>
<feature type="transmembrane region" description="Helical; Name=S2 of repeat III" evidence="2">
    <location>
        <begin position="1061"/>
        <end position="1079"/>
    </location>
</feature>
<feature type="topological domain" description="Cytoplasmic" evidence="7">
    <location>
        <begin position="1080"/>
        <end position="1093"/>
    </location>
</feature>
<feature type="transmembrane region" description="Helical; Name=S3 of repeat III" evidence="2">
    <location>
        <begin position="1094"/>
        <end position="1112"/>
    </location>
</feature>
<feature type="topological domain" description="Extracellular" evidence="7">
    <location>
        <begin position="1113"/>
        <end position="1120"/>
    </location>
</feature>
<feature type="transmembrane region" description="Helical; Name=S4 of repeat III" evidence="2">
    <location>
        <begin position="1121"/>
        <end position="1139"/>
    </location>
</feature>
<feature type="topological domain" description="Cytoplasmic" evidence="7">
    <location>
        <begin position="1140"/>
        <end position="1156"/>
    </location>
</feature>
<feature type="transmembrane region" description="Helical; Name=S5 of repeat III" evidence="2">
    <location>
        <begin position="1157"/>
        <end position="1176"/>
    </location>
</feature>
<feature type="topological domain" description="Extracellular" evidence="7">
    <location>
        <begin position="1177"/>
        <end position="1227"/>
    </location>
</feature>
<feature type="intramembrane region" description="Pore-forming" evidence="2">
    <location>
        <begin position="1228"/>
        <end position="1249"/>
    </location>
</feature>
<feature type="topological domain" description="Extracellular" evidence="7">
    <location>
        <begin position="1250"/>
        <end position="1266"/>
    </location>
</feature>
<feature type="transmembrane region" description="Helical; Name=S6 of repeat III" evidence="2">
    <location>
        <begin position="1267"/>
        <end position="1288"/>
    </location>
</feature>
<feature type="topological domain" description="Cytoplasmic" evidence="7">
    <location>
        <begin position="1289"/>
        <end position="1351"/>
    </location>
</feature>
<feature type="transmembrane region" description="Helical; Name=S1 of repeat IV" evidence="2">
    <location>
        <begin position="1352"/>
        <end position="1369"/>
    </location>
</feature>
<feature type="topological domain" description="Extracellular" evidence="7">
    <location>
        <begin position="1370"/>
        <end position="1380"/>
    </location>
</feature>
<feature type="transmembrane region" description="Helical; Name=S2 of repeat IV" evidence="2">
    <location>
        <begin position="1381"/>
        <end position="1399"/>
    </location>
</feature>
<feature type="topological domain" description="Cytoplasmic" evidence="7">
    <location>
        <begin position="1400"/>
        <end position="1411"/>
    </location>
</feature>
<feature type="transmembrane region" description="Helical; Name=S3 of repeat IV" evidence="2">
    <location>
        <begin position="1412"/>
        <end position="1429"/>
    </location>
</feature>
<feature type="topological domain" description="Extracellular" evidence="7">
    <location>
        <begin position="1430"/>
        <end position="1442"/>
    </location>
</feature>
<feature type="transmembrane region" description="Helical; Name=S4 of repeat IV" evidence="2">
    <location>
        <begin position="1443"/>
        <end position="1459"/>
    </location>
</feature>
<feature type="topological domain" description="Cytoplasmic" evidence="7">
    <location>
        <begin position="1460"/>
        <end position="1478"/>
    </location>
</feature>
<feature type="transmembrane region" description="Helical; Name=S5 of repeat IV" evidence="2">
    <location>
        <begin position="1479"/>
        <end position="1496"/>
    </location>
</feature>
<feature type="topological domain" description="Extracellular" evidence="7">
    <location>
        <begin position="1497"/>
        <end position="1518"/>
    </location>
</feature>
<feature type="intramembrane region" description="Pore-forming" evidence="2">
    <location>
        <begin position="1519"/>
        <end position="1541"/>
    </location>
</feature>
<feature type="topological domain" description="Extracellular" evidence="7">
    <location>
        <begin position="1542"/>
        <end position="1571"/>
    </location>
</feature>
<feature type="transmembrane region" description="Helical; Name=S6 of repeat IV" evidence="2">
    <location>
        <begin position="1572"/>
        <end position="1594"/>
    </location>
</feature>
<feature type="topological domain" description="Cytoplasmic" evidence="7">
    <location>
        <begin position="1595"/>
        <end position="1834"/>
    </location>
</feature>
<feature type="repeat" description="I" evidence="7">
    <location>
        <begin position="113"/>
        <end position="448"/>
    </location>
</feature>
<feature type="repeat" description="II" evidence="7">
    <location>
        <begin position="554"/>
        <end position="826"/>
    </location>
</feature>
<feature type="repeat" description="III" evidence="7">
    <location>
        <begin position="1010"/>
        <end position="1323"/>
    </location>
</feature>
<feature type="repeat" description="IV" evidence="7">
    <location>
        <begin position="1332"/>
        <end position="1630"/>
    </location>
</feature>
<feature type="domain" description="IQ" evidence="4">
    <location>
        <begin position="1724"/>
        <end position="1753"/>
    </location>
</feature>
<feature type="region of interest" description="Disordered" evidence="5">
    <location>
        <begin position="486"/>
        <end position="525"/>
    </location>
</feature>
<feature type="region of interest" description="Disordered" evidence="5">
    <location>
        <begin position="853"/>
        <end position="886"/>
    </location>
</feature>
<feature type="region of interest" description="Disordered" evidence="5">
    <location>
        <begin position="929"/>
        <end position="989"/>
    </location>
</feature>
<feature type="region of interest" description="Important for rapid channel inactivation" evidence="1">
    <location>
        <begin position="1307"/>
        <end position="1309"/>
    </location>
</feature>
<feature type="region of interest" description="Disordered" evidence="5">
    <location>
        <begin position="1776"/>
        <end position="1834"/>
    </location>
</feature>
<feature type="compositionally biased region" description="Acidic residues" evidence="5">
    <location>
        <begin position="860"/>
        <end position="869"/>
    </location>
</feature>
<feature type="compositionally biased region" description="Basic and acidic residues" evidence="5">
    <location>
        <begin position="870"/>
        <end position="886"/>
    </location>
</feature>
<feature type="compositionally biased region" description="Acidic residues" evidence="5">
    <location>
        <begin position="929"/>
        <end position="945"/>
    </location>
</feature>
<feature type="compositionally biased region" description="Acidic residues" evidence="5">
    <location>
        <begin position="972"/>
        <end position="989"/>
    </location>
</feature>
<feature type="site" description="Important for inhibition by tetrodotoxin" evidence="1">
    <location>
        <position position="401"/>
    </location>
</feature>
<feature type="glycosylation site" description="N-linked (GlcNAc...) asparagine" evidence="3">
    <location>
        <position position="214"/>
    </location>
</feature>
<feature type="glycosylation site" description="N-linked (GlcNAc...) asparagine" evidence="3">
    <location>
        <position position="288"/>
    </location>
</feature>
<feature type="glycosylation site" description="N-linked (GlcNAc...) asparagine" evidence="3">
    <location>
        <position position="291"/>
    </location>
</feature>
<feature type="glycosylation site" description="N-linked (GlcNAc...) asparagine" evidence="3">
    <location>
        <position position="297"/>
    </location>
</feature>
<feature type="glycosylation site" description="N-linked (GlcNAc...) asparagine" evidence="3">
    <location>
        <position position="303"/>
    </location>
</feature>
<feature type="glycosylation site" description="N-linked (GlcNAc...) asparagine" evidence="3">
    <location>
        <position position="309"/>
    </location>
</feature>
<feature type="glycosylation site" description="N-linked (GlcNAc...) asparagine" evidence="3">
    <location>
        <position position="327"/>
    </location>
</feature>
<feature type="glycosylation site" description="N-linked (GlcNAc...) asparagine" evidence="3">
    <location>
        <position position="356"/>
    </location>
</feature>
<feature type="glycosylation site" description="N-linked (GlcNAc...) asparagine" evidence="3">
    <location>
        <position position="1188"/>
    </location>
</feature>
<feature type="glycosylation site" description="N-linked (GlcNAc...) asparagine" evidence="3">
    <location>
        <position position="1202"/>
    </location>
</feature>
<feature type="disulfide bond" evidence="2">
    <location>
        <begin position="280"/>
        <end position="354"/>
    </location>
</feature>
<feature type="disulfide bond" evidence="2">
    <location>
        <begin position="363"/>
        <end position="369"/>
    </location>
</feature>
<feature type="disulfide bond" evidence="2">
    <location>
        <begin position="725"/>
        <end position="731"/>
    </location>
</feature>
<feature type="disulfide bond" evidence="2">
    <location>
        <begin position="1550"/>
        <end position="1565"/>
    </location>
</feature>
<feature type="sequence variant" description="In HYPP; found in a Quarter Horse lineage segregating the disease." evidence="6">
    <original>F</original>
    <variation>L</variation>
    <location>
        <position position="1416"/>
    </location>
</feature>
<dbReference type="EMBL" id="U25990">
    <property type="protein sequence ID" value="AAA67366.1"/>
    <property type="molecule type" value="mRNA"/>
</dbReference>
<dbReference type="RefSeq" id="NP_001075230.1">
    <property type="nucleotide sequence ID" value="NM_001081761.1"/>
</dbReference>
<dbReference type="SMR" id="Q28371"/>
<dbReference type="FunCoup" id="Q28371">
    <property type="interactions" value="224"/>
</dbReference>
<dbReference type="STRING" id="9796.ENSECAP00000005581"/>
<dbReference type="GlyCosmos" id="Q28371">
    <property type="glycosylation" value="10 sites, No reported glycans"/>
</dbReference>
<dbReference type="PaxDb" id="9796-ENSECAP00000005581"/>
<dbReference type="GeneID" id="100049793"/>
<dbReference type="KEGG" id="ecb:100049793"/>
<dbReference type="CTD" id="6329"/>
<dbReference type="InParanoid" id="Q28371"/>
<dbReference type="OrthoDB" id="2984333at2759"/>
<dbReference type="Proteomes" id="UP000002281">
    <property type="component" value="Unplaced"/>
</dbReference>
<dbReference type="GO" id="GO:0005886">
    <property type="term" value="C:plasma membrane"/>
    <property type="evidence" value="ECO:0000250"/>
    <property type="project" value="UniProtKB"/>
</dbReference>
<dbReference type="GO" id="GO:0001518">
    <property type="term" value="C:voltage-gated sodium channel complex"/>
    <property type="evidence" value="ECO:0000250"/>
    <property type="project" value="UniProtKB"/>
</dbReference>
<dbReference type="GO" id="GO:0005248">
    <property type="term" value="F:voltage-gated sodium channel activity"/>
    <property type="evidence" value="ECO:0000250"/>
    <property type="project" value="UniProtKB"/>
</dbReference>
<dbReference type="GO" id="GO:0086002">
    <property type="term" value="P:cardiac muscle cell action potential involved in contraction"/>
    <property type="evidence" value="ECO:0000318"/>
    <property type="project" value="GO_Central"/>
</dbReference>
<dbReference type="GO" id="GO:0100001">
    <property type="term" value="P:regulation of skeletal muscle contraction by action potential"/>
    <property type="evidence" value="ECO:0000250"/>
    <property type="project" value="UniProtKB"/>
</dbReference>
<dbReference type="GO" id="GO:0035725">
    <property type="term" value="P:sodium ion transmembrane transport"/>
    <property type="evidence" value="ECO:0000250"/>
    <property type="project" value="UniProtKB"/>
</dbReference>
<dbReference type="CDD" id="cd13433">
    <property type="entry name" value="Na_channel_gate"/>
    <property type="match status" value="1"/>
</dbReference>
<dbReference type="FunFam" id="1.10.287.70:FF:000051">
    <property type="entry name" value="Sodium channel 1"/>
    <property type="match status" value="1"/>
</dbReference>
<dbReference type="FunFam" id="1.10.238.10:FF:000002">
    <property type="entry name" value="Sodium channel protein"/>
    <property type="match status" value="1"/>
</dbReference>
<dbReference type="FunFam" id="1.10.287.70:FF:000001">
    <property type="entry name" value="Sodium channel protein"/>
    <property type="match status" value="1"/>
</dbReference>
<dbReference type="FunFam" id="1.20.120.350:FF:000002">
    <property type="entry name" value="Sodium channel protein"/>
    <property type="match status" value="1"/>
</dbReference>
<dbReference type="FunFam" id="1.20.120.350:FF:000004">
    <property type="entry name" value="Sodium channel protein"/>
    <property type="match status" value="1"/>
</dbReference>
<dbReference type="FunFam" id="1.20.120.350:FF:000005">
    <property type="entry name" value="Sodium channel protein"/>
    <property type="match status" value="1"/>
</dbReference>
<dbReference type="FunFam" id="1.20.5.1190:FF:000001">
    <property type="entry name" value="Sodium channel protein"/>
    <property type="match status" value="1"/>
</dbReference>
<dbReference type="FunFam" id="1.20.120.350:FF:000003">
    <property type="entry name" value="Voltage-dependent sodium channel"/>
    <property type="match status" value="1"/>
</dbReference>
<dbReference type="FunFam" id="1.10.287.70:FF:000049">
    <property type="entry name" value="Voltage-dependent sodium channel 2"/>
    <property type="match status" value="1"/>
</dbReference>
<dbReference type="Gene3D" id="1.10.287.70">
    <property type="match status" value="4"/>
</dbReference>
<dbReference type="Gene3D" id="1.10.238.10">
    <property type="entry name" value="EF-hand"/>
    <property type="match status" value="1"/>
</dbReference>
<dbReference type="Gene3D" id="1.20.5.1190">
    <property type="entry name" value="iswi atpase"/>
    <property type="match status" value="1"/>
</dbReference>
<dbReference type="Gene3D" id="1.20.120.350">
    <property type="entry name" value="Voltage-gated potassium channels. Chain C"/>
    <property type="match status" value="4"/>
</dbReference>
<dbReference type="InterPro" id="IPR005821">
    <property type="entry name" value="Ion_trans_dom"/>
</dbReference>
<dbReference type="InterPro" id="IPR008052">
    <property type="entry name" value="Na_channel_a4su_mammal"/>
</dbReference>
<dbReference type="InterPro" id="IPR001696">
    <property type="entry name" value="Na_channel_asu"/>
</dbReference>
<dbReference type="InterPro" id="IPR044564">
    <property type="entry name" value="Na_chnl_inactivation_gate"/>
</dbReference>
<dbReference type="InterPro" id="IPR010526">
    <property type="entry name" value="Na_trans_assoc_dom"/>
</dbReference>
<dbReference type="InterPro" id="IPR043203">
    <property type="entry name" value="VGCC_Ca_Na"/>
</dbReference>
<dbReference type="InterPro" id="IPR027359">
    <property type="entry name" value="Volt_channel_dom_sf"/>
</dbReference>
<dbReference type="PANTHER" id="PTHR10037:SF223">
    <property type="entry name" value="SODIUM CHANNEL PROTEIN TYPE 4 SUBUNIT ALPHA"/>
    <property type="match status" value="1"/>
</dbReference>
<dbReference type="PANTHER" id="PTHR10037">
    <property type="entry name" value="VOLTAGE-GATED CATION CHANNEL CALCIUM AND SODIUM"/>
    <property type="match status" value="1"/>
</dbReference>
<dbReference type="Pfam" id="PF00520">
    <property type="entry name" value="Ion_trans"/>
    <property type="match status" value="4"/>
</dbReference>
<dbReference type="Pfam" id="PF24609">
    <property type="entry name" value="IQ_SCN5A_C"/>
    <property type="match status" value="1"/>
</dbReference>
<dbReference type="Pfam" id="PF06512">
    <property type="entry name" value="Na_trans_assoc"/>
    <property type="match status" value="1"/>
</dbReference>
<dbReference type="PRINTS" id="PR00170">
    <property type="entry name" value="NACHANNEL"/>
</dbReference>
<dbReference type="PRINTS" id="PR01665">
    <property type="entry name" value="NACHANNEL4"/>
</dbReference>
<dbReference type="SUPFAM" id="SSF81324">
    <property type="entry name" value="Voltage-gated potassium channels"/>
    <property type="match status" value="3"/>
</dbReference>
<dbReference type="PROSITE" id="PS50096">
    <property type="entry name" value="IQ"/>
    <property type="match status" value="1"/>
</dbReference>
<gene>
    <name evidence="2" type="primary">SCN4A</name>
</gene>